<feature type="chain" id="PRO_1000141036" description="Small ribosomal subunit protein uS3">
    <location>
        <begin position="1"/>
        <end position="239"/>
    </location>
</feature>
<feature type="domain" description="KH type-2" evidence="1">
    <location>
        <begin position="39"/>
        <end position="107"/>
    </location>
</feature>
<feature type="region of interest" description="Disordered" evidence="2">
    <location>
        <begin position="214"/>
        <end position="239"/>
    </location>
</feature>
<feature type="compositionally biased region" description="Basic and acidic residues" evidence="2">
    <location>
        <begin position="216"/>
        <end position="239"/>
    </location>
</feature>
<proteinExistence type="inferred from homology"/>
<dbReference type="EMBL" id="CP000941">
    <property type="protein sequence ID" value="ACA11509.1"/>
    <property type="molecule type" value="Genomic_DNA"/>
</dbReference>
<dbReference type="RefSeq" id="WP_004086530.1">
    <property type="nucleotide sequence ID" value="NC_010513.1"/>
</dbReference>
<dbReference type="SMR" id="B0U5K5"/>
<dbReference type="KEGG" id="xfm:Xfasm12_0500"/>
<dbReference type="HOGENOM" id="CLU_058591_0_2_6"/>
<dbReference type="GO" id="GO:0022627">
    <property type="term" value="C:cytosolic small ribosomal subunit"/>
    <property type="evidence" value="ECO:0007669"/>
    <property type="project" value="TreeGrafter"/>
</dbReference>
<dbReference type="GO" id="GO:0003729">
    <property type="term" value="F:mRNA binding"/>
    <property type="evidence" value="ECO:0007669"/>
    <property type="project" value="UniProtKB-UniRule"/>
</dbReference>
<dbReference type="GO" id="GO:0019843">
    <property type="term" value="F:rRNA binding"/>
    <property type="evidence" value="ECO:0007669"/>
    <property type="project" value="UniProtKB-UniRule"/>
</dbReference>
<dbReference type="GO" id="GO:0003735">
    <property type="term" value="F:structural constituent of ribosome"/>
    <property type="evidence" value="ECO:0007669"/>
    <property type="project" value="InterPro"/>
</dbReference>
<dbReference type="GO" id="GO:0006412">
    <property type="term" value="P:translation"/>
    <property type="evidence" value="ECO:0007669"/>
    <property type="project" value="UniProtKB-UniRule"/>
</dbReference>
<dbReference type="CDD" id="cd02412">
    <property type="entry name" value="KH-II_30S_S3"/>
    <property type="match status" value="1"/>
</dbReference>
<dbReference type="FunFam" id="3.30.300.20:FF:000001">
    <property type="entry name" value="30S ribosomal protein S3"/>
    <property type="match status" value="1"/>
</dbReference>
<dbReference type="Gene3D" id="3.30.300.20">
    <property type="match status" value="1"/>
</dbReference>
<dbReference type="Gene3D" id="3.30.1140.32">
    <property type="entry name" value="Ribosomal protein S3, C-terminal domain"/>
    <property type="match status" value="1"/>
</dbReference>
<dbReference type="HAMAP" id="MF_01309_B">
    <property type="entry name" value="Ribosomal_uS3_B"/>
    <property type="match status" value="1"/>
</dbReference>
<dbReference type="InterPro" id="IPR004087">
    <property type="entry name" value="KH_dom"/>
</dbReference>
<dbReference type="InterPro" id="IPR015946">
    <property type="entry name" value="KH_dom-like_a/b"/>
</dbReference>
<dbReference type="InterPro" id="IPR004044">
    <property type="entry name" value="KH_dom_type_2"/>
</dbReference>
<dbReference type="InterPro" id="IPR009019">
    <property type="entry name" value="KH_sf_prok-type"/>
</dbReference>
<dbReference type="InterPro" id="IPR036419">
    <property type="entry name" value="Ribosomal_S3_C_sf"/>
</dbReference>
<dbReference type="InterPro" id="IPR005704">
    <property type="entry name" value="Ribosomal_uS3_bac-typ"/>
</dbReference>
<dbReference type="InterPro" id="IPR001351">
    <property type="entry name" value="Ribosomal_uS3_C"/>
</dbReference>
<dbReference type="NCBIfam" id="TIGR01009">
    <property type="entry name" value="rpsC_bact"/>
    <property type="match status" value="1"/>
</dbReference>
<dbReference type="PANTHER" id="PTHR11760">
    <property type="entry name" value="30S/40S RIBOSOMAL PROTEIN S3"/>
    <property type="match status" value="1"/>
</dbReference>
<dbReference type="PANTHER" id="PTHR11760:SF19">
    <property type="entry name" value="SMALL RIBOSOMAL SUBUNIT PROTEIN US3C"/>
    <property type="match status" value="1"/>
</dbReference>
<dbReference type="Pfam" id="PF07650">
    <property type="entry name" value="KH_2"/>
    <property type="match status" value="1"/>
</dbReference>
<dbReference type="Pfam" id="PF00189">
    <property type="entry name" value="Ribosomal_S3_C"/>
    <property type="match status" value="1"/>
</dbReference>
<dbReference type="SMART" id="SM00322">
    <property type="entry name" value="KH"/>
    <property type="match status" value="1"/>
</dbReference>
<dbReference type="SUPFAM" id="SSF54814">
    <property type="entry name" value="Prokaryotic type KH domain (KH-domain type II)"/>
    <property type="match status" value="1"/>
</dbReference>
<dbReference type="SUPFAM" id="SSF54821">
    <property type="entry name" value="Ribosomal protein S3 C-terminal domain"/>
    <property type="match status" value="1"/>
</dbReference>
<dbReference type="PROSITE" id="PS50823">
    <property type="entry name" value="KH_TYPE_2"/>
    <property type="match status" value="1"/>
</dbReference>
<protein>
    <recommendedName>
        <fullName evidence="1">Small ribosomal subunit protein uS3</fullName>
    </recommendedName>
    <alternativeName>
        <fullName evidence="3">30S ribosomal protein S3</fullName>
    </alternativeName>
</protein>
<keyword id="KW-0687">Ribonucleoprotein</keyword>
<keyword id="KW-0689">Ribosomal protein</keyword>
<keyword id="KW-0694">RNA-binding</keyword>
<keyword id="KW-0699">rRNA-binding</keyword>
<sequence>MGHKVHPIGIRLGISADWNSKWYANKAEFAGYLAADLKVRQVLRKKMSQAGISKILIERPSNAACVSMHVARPGVVIGKRGEDIEMLRKQLSDIMGVSVHINVIEVRKPELDAQLVAESVAQQLERRIMFRRAMKRSVSNAIRLGALGIKISVAGRLNGAEIARSEWYREGRVPLQTLRADIGYGFSEAHTNYGVTGVKVLIYHGDIFSFSSVGQEKQDDGSRGDRNADRSSRRSREVR</sequence>
<evidence type="ECO:0000255" key="1">
    <source>
        <dbReference type="HAMAP-Rule" id="MF_01309"/>
    </source>
</evidence>
<evidence type="ECO:0000256" key="2">
    <source>
        <dbReference type="SAM" id="MobiDB-lite"/>
    </source>
</evidence>
<evidence type="ECO:0000305" key="3"/>
<name>RS3_XYLFM</name>
<reference key="1">
    <citation type="journal article" date="2010" name="J. Bacteriol.">
        <title>Whole genome sequences of two Xylella fastidiosa strains (M12 and M23) causing almond leaf scorch disease in California.</title>
        <authorList>
            <person name="Chen J."/>
            <person name="Xie G."/>
            <person name="Han S."/>
            <person name="Chertkov O."/>
            <person name="Sims D."/>
            <person name="Civerolo E.L."/>
        </authorList>
    </citation>
    <scope>NUCLEOTIDE SEQUENCE [LARGE SCALE GENOMIC DNA]</scope>
    <source>
        <strain>M12</strain>
    </source>
</reference>
<comment type="function">
    <text evidence="1">Binds the lower part of the 30S subunit head. Binds mRNA in the 70S ribosome, positioning it for translation.</text>
</comment>
<comment type="subunit">
    <text evidence="1">Part of the 30S ribosomal subunit. Forms a tight complex with proteins S10 and S14.</text>
</comment>
<comment type="similarity">
    <text evidence="1">Belongs to the universal ribosomal protein uS3 family.</text>
</comment>
<organism>
    <name type="scientific">Xylella fastidiosa (strain M12)</name>
    <dbReference type="NCBI Taxonomy" id="405440"/>
    <lineage>
        <taxon>Bacteria</taxon>
        <taxon>Pseudomonadati</taxon>
        <taxon>Pseudomonadota</taxon>
        <taxon>Gammaproteobacteria</taxon>
        <taxon>Lysobacterales</taxon>
        <taxon>Lysobacteraceae</taxon>
        <taxon>Xylella</taxon>
    </lineage>
</organism>
<accession>B0U5K5</accession>
<gene>
    <name evidence="1" type="primary">rpsC</name>
    <name type="ordered locus">Xfasm12_0500</name>
</gene>